<reference key="1">
    <citation type="submission" date="2007-02" db="EMBL/GenBank/DDBJ databases">
        <title>Complete sequence of Mycobacterium sp. JLS.</title>
        <authorList>
            <consortium name="US DOE Joint Genome Institute"/>
            <person name="Copeland A."/>
            <person name="Lucas S."/>
            <person name="Lapidus A."/>
            <person name="Barry K."/>
            <person name="Detter J.C."/>
            <person name="Glavina del Rio T."/>
            <person name="Hammon N."/>
            <person name="Israni S."/>
            <person name="Dalin E."/>
            <person name="Tice H."/>
            <person name="Pitluck S."/>
            <person name="Chain P."/>
            <person name="Malfatti S."/>
            <person name="Shin M."/>
            <person name="Vergez L."/>
            <person name="Schmutz J."/>
            <person name="Larimer F."/>
            <person name="Land M."/>
            <person name="Hauser L."/>
            <person name="Kyrpides N."/>
            <person name="Mikhailova N."/>
            <person name="Miller C.D."/>
            <person name="Anderson A.J."/>
            <person name="Sims R.C."/>
            <person name="Richardson P."/>
        </authorList>
    </citation>
    <scope>NUCLEOTIDE SEQUENCE [LARGE SCALE GENOMIC DNA]</scope>
    <source>
        <strain>JLS</strain>
    </source>
</reference>
<name>RS20_MYCSJ</name>
<sequence length="86" mass="9528">MANIKSQEKRIRTNERRRLRNQSVKSSLRTAVRGFREALDAGDKDKAAELLVATSRKLDKAASKGVIHKNQAANKKSALSVALNKL</sequence>
<evidence type="ECO:0000255" key="1">
    <source>
        <dbReference type="HAMAP-Rule" id="MF_00500"/>
    </source>
</evidence>
<evidence type="ECO:0000256" key="2">
    <source>
        <dbReference type="SAM" id="MobiDB-lite"/>
    </source>
</evidence>
<evidence type="ECO:0000305" key="3"/>
<organism>
    <name type="scientific">Mycobacterium sp. (strain JLS)</name>
    <dbReference type="NCBI Taxonomy" id="164757"/>
    <lineage>
        <taxon>Bacteria</taxon>
        <taxon>Bacillati</taxon>
        <taxon>Actinomycetota</taxon>
        <taxon>Actinomycetes</taxon>
        <taxon>Mycobacteriales</taxon>
        <taxon>Mycobacteriaceae</taxon>
        <taxon>Mycobacterium</taxon>
    </lineage>
</organism>
<accession>A3Q2C2</accession>
<protein>
    <recommendedName>
        <fullName evidence="1">Small ribosomal subunit protein bS20</fullName>
    </recommendedName>
    <alternativeName>
        <fullName evidence="3">30S ribosomal protein S20</fullName>
    </alternativeName>
</protein>
<comment type="function">
    <text evidence="1">Binds directly to 16S ribosomal RNA.</text>
</comment>
<comment type="similarity">
    <text evidence="1">Belongs to the bacterial ribosomal protein bS20 family.</text>
</comment>
<dbReference type="EMBL" id="CP000580">
    <property type="protein sequence ID" value="ABN99299.1"/>
    <property type="molecule type" value="Genomic_DNA"/>
</dbReference>
<dbReference type="SMR" id="A3Q2C2"/>
<dbReference type="KEGG" id="mjl:Mjls_3522"/>
<dbReference type="HOGENOM" id="CLU_160655_0_1_11"/>
<dbReference type="BioCyc" id="MSP164757:G1G8C-3552-MONOMER"/>
<dbReference type="GO" id="GO:0005829">
    <property type="term" value="C:cytosol"/>
    <property type="evidence" value="ECO:0007669"/>
    <property type="project" value="TreeGrafter"/>
</dbReference>
<dbReference type="GO" id="GO:0015935">
    <property type="term" value="C:small ribosomal subunit"/>
    <property type="evidence" value="ECO:0007669"/>
    <property type="project" value="TreeGrafter"/>
</dbReference>
<dbReference type="GO" id="GO:0070181">
    <property type="term" value="F:small ribosomal subunit rRNA binding"/>
    <property type="evidence" value="ECO:0007669"/>
    <property type="project" value="TreeGrafter"/>
</dbReference>
<dbReference type="GO" id="GO:0003735">
    <property type="term" value="F:structural constituent of ribosome"/>
    <property type="evidence" value="ECO:0007669"/>
    <property type="project" value="InterPro"/>
</dbReference>
<dbReference type="GO" id="GO:0006412">
    <property type="term" value="P:translation"/>
    <property type="evidence" value="ECO:0007669"/>
    <property type="project" value="UniProtKB-UniRule"/>
</dbReference>
<dbReference type="FunFam" id="1.20.58.110:FF:000001">
    <property type="entry name" value="30S ribosomal protein S20"/>
    <property type="match status" value="1"/>
</dbReference>
<dbReference type="Gene3D" id="1.20.58.110">
    <property type="entry name" value="Ribosomal protein S20"/>
    <property type="match status" value="1"/>
</dbReference>
<dbReference type="HAMAP" id="MF_00500">
    <property type="entry name" value="Ribosomal_bS20"/>
    <property type="match status" value="1"/>
</dbReference>
<dbReference type="InterPro" id="IPR002583">
    <property type="entry name" value="Ribosomal_bS20"/>
</dbReference>
<dbReference type="InterPro" id="IPR036510">
    <property type="entry name" value="Ribosomal_bS20_sf"/>
</dbReference>
<dbReference type="NCBIfam" id="TIGR00029">
    <property type="entry name" value="S20"/>
    <property type="match status" value="1"/>
</dbReference>
<dbReference type="PANTHER" id="PTHR33398">
    <property type="entry name" value="30S RIBOSOMAL PROTEIN S20"/>
    <property type="match status" value="1"/>
</dbReference>
<dbReference type="PANTHER" id="PTHR33398:SF1">
    <property type="entry name" value="SMALL RIBOSOMAL SUBUNIT PROTEIN BS20C"/>
    <property type="match status" value="1"/>
</dbReference>
<dbReference type="Pfam" id="PF01649">
    <property type="entry name" value="Ribosomal_S20p"/>
    <property type="match status" value="1"/>
</dbReference>
<dbReference type="SUPFAM" id="SSF46992">
    <property type="entry name" value="Ribosomal protein S20"/>
    <property type="match status" value="1"/>
</dbReference>
<proteinExistence type="inferred from homology"/>
<keyword id="KW-0687">Ribonucleoprotein</keyword>
<keyword id="KW-0689">Ribosomal protein</keyword>
<keyword id="KW-0694">RNA-binding</keyword>
<keyword id="KW-0699">rRNA-binding</keyword>
<feature type="chain" id="PRO_1000014607" description="Small ribosomal subunit protein bS20">
    <location>
        <begin position="1"/>
        <end position="86"/>
    </location>
</feature>
<feature type="region of interest" description="Disordered" evidence="2">
    <location>
        <begin position="1"/>
        <end position="25"/>
    </location>
</feature>
<feature type="compositionally biased region" description="Basic and acidic residues" evidence="2">
    <location>
        <begin position="1"/>
        <end position="16"/>
    </location>
</feature>
<gene>
    <name evidence="1" type="primary">rpsT</name>
    <name type="ordered locus">Mjls_3522</name>
</gene>